<sequence length="171" mass="19416">MPLLDSFTVDHTRMEAPAVRVAKTMNTPHGDAITVFDLRFCVPNKEVMPERGIHTLEHLFAGFMRNHLNGNGVEIIDISPMGCRTGFYMSLIGTPDEQRVADAWKAAMEDVLKVQDQNQIPELNVYQCGTYQMHSLQEAQDIARSILERDVRINSNEELALPKEKLQELHI</sequence>
<comment type="function">
    <text evidence="1">Involved in the synthesis of autoinducer 2 (AI-2) which is secreted by bacteria and is used to communicate both the cell density and the metabolic potential of the environment. The regulation of gene expression in response to changes in cell density is called quorum sensing. Catalyzes the transformation of S-ribosylhomocysteine (RHC) to homocysteine (HC) and 4,5-dihydroxy-2,3-pentadione (DPD).</text>
</comment>
<comment type="catalytic activity">
    <reaction evidence="1">
        <text>S-(5-deoxy-D-ribos-5-yl)-L-homocysteine = (S)-4,5-dihydroxypentane-2,3-dione + L-homocysteine</text>
        <dbReference type="Rhea" id="RHEA:17753"/>
        <dbReference type="ChEBI" id="CHEBI:29484"/>
        <dbReference type="ChEBI" id="CHEBI:58195"/>
        <dbReference type="ChEBI" id="CHEBI:58199"/>
        <dbReference type="EC" id="4.4.1.21"/>
    </reaction>
</comment>
<comment type="cofactor">
    <cofactor evidence="1">
        <name>Fe cation</name>
        <dbReference type="ChEBI" id="CHEBI:24875"/>
    </cofactor>
    <text evidence="1">Binds 1 Fe cation per subunit.</text>
</comment>
<comment type="subunit">
    <text evidence="1">Homodimer.</text>
</comment>
<comment type="similarity">
    <text evidence="1">Belongs to the LuxS family.</text>
</comment>
<accession>Q1R809</accession>
<feature type="chain" id="PRO_0000297995" description="S-ribosylhomocysteine lyase">
    <location>
        <begin position="1"/>
        <end position="171"/>
    </location>
</feature>
<feature type="binding site" evidence="1">
    <location>
        <position position="54"/>
    </location>
    <ligand>
        <name>Fe cation</name>
        <dbReference type="ChEBI" id="CHEBI:24875"/>
    </ligand>
</feature>
<feature type="binding site" evidence="1">
    <location>
        <position position="58"/>
    </location>
    <ligand>
        <name>Fe cation</name>
        <dbReference type="ChEBI" id="CHEBI:24875"/>
    </ligand>
</feature>
<feature type="binding site" evidence="1">
    <location>
        <position position="128"/>
    </location>
    <ligand>
        <name>Fe cation</name>
        <dbReference type="ChEBI" id="CHEBI:24875"/>
    </ligand>
</feature>
<organism>
    <name type="scientific">Escherichia coli (strain UTI89 / UPEC)</name>
    <dbReference type="NCBI Taxonomy" id="364106"/>
    <lineage>
        <taxon>Bacteria</taxon>
        <taxon>Pseudomonadati</taxon>
        <taxon>Pseudomonadota</taxon>
        <taxon>Gammaproteobacteria</taxon>
        <taxon>Enterobacterales</taxon>
        <taxon>Enterobacteriaceae</taxon>
        <taxon>Escherichia</taxon>
    </lineage>
</organism>
<name>LUXS_ECOUT</name>
<protein>
    <recommendedName>
        <fullName evidence="1">S-ribosylhomocysteine lyase</fullName>
        <ecNumber evidence="1">4.4.1.21</ecNumber>
    </recommendedName>
    <alternativeName>
        <fullName evidence="1">AI-2 synthesis protein</fullName>
    </alternativeName>
    <alternativeName>
        <fullName evidence="1">Autoinducer-2 production protein LuxS</fullName>
    </alternativeName>
</protein>
<proteinExistence type="inferred from homology"/>
<dbReference type="EC" id="4.4.1.21" evidence="1"/>
<dbReference type="EMBL" id="CP000243">
    <property type="protein sequence ID" value="ABE08505.1"/>
    <property type="molecule type" value="Genomic_DNA"/>
</dbReference>
<dbReference type="RefSeq" id="WP_001130211.1">
    <property type="nucleotide sequence ID" value="NZ_CP064825.1"/>
</dbReference>
<dbReference type="SMR" id="Q1R809"/>
<dbReference type="GeneID" id="93779324"/>
<dbReference type="KEGG" id="eci:UTI89_C3049"/>
<dbReference type="HOGENOM" id="CLU_107531_2_0_6"/>
<dbReference type="Proteomes" id="UP000001952">
    <property type="component" value="Chromosome"/>
</dbReference>
<dbReference type="GO" id="GO:0005506">
    <property type="term" value="F:iron ion binding"/>
    <property type="evidence" value="ECO:0007669"/>
    <property type="project" value="InterPro"/>
</dbReference>
<dbReference type="GO" id="GO:0043768">
    <property type="term" value="F:S-ribosylhomocysteine lyase activity"/>
    <property type="evidence" value="ECO:0007669"/>
    <property type="project" value="UniProtKB-UniRule"/>
</dbReference>
<dbReference type="GO" id="GO:0009372">
    <property type="term" value="P:quorum sensing"/>
    <property type="evidence" value="ECO:0007669"/>
    <property type="project" value="UniProtKB-UniRule"/>
</dbReference>
<dbReference type="FunFam" id="3.30.1360.80:FF:000001">
    <property type="entry name" value="S-ribosylhomocysteine lyase"/>
    <property type="match status" value="1"/>
</dbReference>
<dbReference type="Gene3D" id="3.30.1360.80">
    <property type="entry name" value="S-ribosylhomocysteinase (LuxS)"/>
    <property type="match status" value="1"/>
</dbReference>
<dbReference type="HAMAP" id="MF_00091">
    <property type="entry name" value="LuxS"/>
    <property type="match status" value="1"/>
</dbReference>
<dbReference type="InterPro" id="IPR037005">
    <property type="entry name" value="LuxS_sf"/>
</dbReference>
<dbReference type="InterPro" id="IPR011249">
    <property type="entry name" value="Metalloenz_LuxS/M16"/>
</dbReference>
<dbReference type="InterPro" id="IPR003815">
    <property type="entry name" value="S-ribosylhomocysteinase"/>
</dbReference>
<dbReference type="NCBIfam" id="NF002602">
    <property type="entry name" value="PRK02260.1-2"/>
    <property type="match status" value="1"/>
</dbReference>
<dbReference type="PANTHER" id="PTHR35799">
    <property type="entry name" value="S-RIBOSYLHOMOCYSTEINE LYASE"/>
    <property type="match status" value="1"/>
</dbReference>
<dbReference type="PANTHER" id="PTHR35799:SF1">
    <property type="entry name" value="S-RIBOSYLHOMOCYSTEINE LYASE"/>
    <property type="match status" value="1"/>
</dbReference>
<dbReference type="Pfam" id="PF02664">
    <property type="entry name" value="LuxS"/>
    <property type="match status" value="1"/>
</dbReference>
<dbReference type="PIRSF" id="PIRSF006160">
    <property type="entry name" value="AI2"/>
    <property type="match status" value="1"/>
</dbReference>
<dbReference type="PRINTS" id="PR01487">
    <property type="entry name" value="LUXSPROTEIN"/>
</dbReference>
<dbReference type="SUPFAM" id="SSF63411">
    <property type="entry name" value="LuxS/MPP-like metallohydrolase"/>
    <property type="match status" value="1"/>
</dbReference>
<evidence type="ECO:0000255" key="1">
    <source>
        <dbReference type="HAMAP-Rule" id="MF_00091"/>
    </source>
</evidence>
<gene>
    <name evidence="1" type="primary">luxS</name>
    <name type="ordered locus">UTI89_C3049</name>
</gene>
<reference key="1">
    <citation type="journal article" date="2006" name="Proc. Natl. Acad. Sci. U.S.A.">
        <title>Identification of genes subject to positive selection in uropathogenic strains of Escherichia coli: a comparative genomics approach.</title>
        <authorList>
            <person name="Chen S.L."/>
            <person name="Hung C.-S."/>
            <person name="Xu J."/>
            <person name="Reigstad C.S."/>
            <person name="Magrini V."/>
            <person name="Sabo A."/>
            <person name="Blasiar D."/>
            <person name="Bieri T."/>
            <person name="Meyer R.R."/>
            <person name="Ozersky P."/>
            <person name="Armstrong J.R."/>
            <person name="Fulton R.S."/>
            <person name="Latreille J.P."/>
            <person name="Spieth J."/>
            <person name="Hooton T.M."/>
            <person name="Mardis E.R."/>
            <person name="Hultgren S.J."/>
            <person name="Gordon J.I."/>
        </authorList>
    </citation>
    <scope>NUCLEOTIDE SEQUENCE [LARGE SCALE GENOMIC DNA]</scope>
    <source>
        <strain>UTI89 / UPEC</strain>
    </source>
</reference>
<keyword id="KW-0071">Autoinducer synthesis</keyword>
<keyword id="KW-0408">Iron</keyword>
<keyword id="KW-0456">Lyase</keyword>
<keyword id="KW-0479">Metal-binding</keyword>
<keyword id="KW-0673">Quorum sensing</keyword>